<protein>
    <recommendedName>
        <fullName evidence="1">ATP-dependent Clp protease adapter protein ClpS</fullName>
    </recommendedName>
</protein>
<dbReference type="EMBL" id="BX897700">
    <property type="protein sequence ID" value="CAF26195.1"/>
    <property type="status" value="ALT_INIT"/>
    <property type="molecule type" value="Genomic_DNA"/>
</dbReference>
<dbReference type="SMR" id="Q6FZM5"/>
<dbReference type="KEGG" id="bqu:BQ07060"/>
<dbReference type="eggNOG" id="COG2127">
    <property type="taxonomic scope" value="Bacteria"/>
</dbReference>
<dbReference type="HOGENOM" id="CLU_134358_0_0_5"/>
<dbReference type="Proteomes" id="UP000000597">
    <property type="component" value="Chromosome"/>
</dbReference>
<dbReference type="GO" id="GO:0030163">
    <property type="term" value="P:protein catabolic process"/>
    <property type="evidence" value="ECO:0007669"/>
    <property type="project" value="InterPro"/>
</dbReference>
<dbReference type="GO" id="GO:0006508">
    <property type="term" value="P:proteolysis"/>
    <property type="evidence" value="ECO:0007669"/>
    <property type="project" value="UniProtKB-UniRule"/>
</dbReference>
<dbReference type="FunFam" id="3.30.1390.10:FF:000002">
    <property type="entry name" value="ATP-dependent Clp protease adapter protein ClpS"/>
    <property type="match status" value="1"/>
</dbReference>
<dbReference type="Gene3D" id="3.30.1390.10">
    <property type="match status" value="1"/>
</dbReference>
<dbReference type="HAMAP" id="MF_00302">
    <property type="entry name" value="ClpS"/>
    <property type="match status" value="1"/>
</dbReference>
<dbReference type="InterPro" id="IPR022935">
    <property type="entry name" value="ClpS"/>
</dbReference>
<dbReference type="InterPro" id="IPR003769">
    <property type="entry name" value="ClpS_core"/>
</dbReference>
<dbReference type="InterPro" id="IPR014719">
    <property type="entry name" value="Ribosomal_bL12_C/ClpS-like"/>
</dbReference>
<dbReference type="NCBIfam" id="NF000672">
    <property type="entry name" value="PRK00033.1-5"/>
    <property type="match status" value="1"/>
</dbReference>
<dbReference type="PANTHER" id="PTHR33473:SF19">
    <property type="entry name" value="ATP-DEPENDENT CLP PROTEASE ADAPTER PROTEIN CLPS"/>
    <property type="match status" value="1"/>
</dbReference>
<dbReference type="PANTHER" id="PTHR33473">
    <property type="entry name" value="ATP-DEPENDENT CLP PROTEASE ADAPTER PROTEIN CLPS1, CHLOROPLASTIC"/>
    <property type="match status" value="1"/>
</dbReference>
<dbReference type="Pfam" id="PF02617">
    <property type="entry name" value="ClpS"/>
    <property type="match status" value="1"/>
</dbReference>
<dbReference type="SUPFAM" id="SSF54736">
    <property type="entry name" value="ClpS-like"/>
    <property type="match status" value="1"/>
</dbReference>
<sequence>MQNEKGKNWDESRHDAVIIPKMRSKLQKPKLYRVFLFNDDYTPMDFVVFVLKNFFKKSFEEATHIMLNVHQNGVGECGIYSYEVAEMKVIQVRECAHQNEHPLQCVMEWK</sequence>
<proteinExistence type="inferred from homology"/>
<evidence type="ECO:0000255" key="1">
    <source>
        <dbReference type="HAMAP-Rule" id="MF_00302"/>
    </source>
</evidence>
<evidence type="ECO:0000305" key="2"/>
<gene>
    <name evidence="1" type="primary">clpS</name>
    <name type="ordered locus">BQ07060</name>
</gene>
<feature type="chain" id="PRO_0000215685" description="ATP-dependent Clp protease adapter protein ClpS">
    <location>
        <begin position="1"/>
        <end position="110"/>
    </location>
</feature>
<name>CLPS_BARQU</name>
<organism>
    <name type="scientific">Bartonella quintana (strain Toulouse)</name>
    <name type="common">Rochalimaea quintana</name>
    <dbReference type="NCBI Taxonomy" id="283165"/>
    <lineage>
        <taxon>Bacteria</taxon>
        <taxon>Pseudomonadati</taxon>
        <taxon>Pseudomonadota</taxon>
        <taxon>Alphaproteobacteria</taxon>
        <taxon>Hyphomicrobiales</taxon>
        <taxon>Bartonellaceae</taxon>
        <taxon>Bartonella</taxon>
    </lineage>
</organism>
<accession>Q6FZM5</accession>
<reference key="1">
    <citation type="journal article" date="2004" name="Proc. Natl. Acad. Sci. U.S.A.">
        <title>The louse-borne human pathogen Bartonella quintana is a genomic derivative of the zoonotic agent Bartonella henselae.</title>
        <authorList>
            <person name="Alsmark U.C.M."/>
            <person name="Frank A.C."/>
            <person name="Karlberg E.O."/>
            <person name="Legault B.-A."/>
            <person name="Ardell D.H."/>
            <person name="Canbaeck B."/>
            <person name="Eriksson A.-S."/>
            <person name="Naeslund A.K."/>
            <person name="Handley S.A."/>
            <person name="Huvet M."/>
            <person name="La Scola B."/>
            <person name="Holmberg M."/>
            <person name="Andersson S.G.E."/>
        </authorList>
    </citation>
    <scope>NUCLEOTIDE SEQUENCE [LARGE SCALE GENOMIC DNA]</scope>
    <source>
        <strain>Toulouse</strain>
    </source>
</reference>
<comment type="function">
    <text evidence="1">Involved in the modulation of the specificity of the ClpAP-mediated ATP-dependent protein degradation.</text>
</comment>
<comment type="subunit">
    <text evidence="1">Binds to the N-terminal domain of the chaperone ClpA.</text>
</comment>
<comment type="similarity">
    <text evidence="1">Belongs to the ClpS family.</text>
</comment>
<comment type="sequence caution" evidence="2">
    <conflict type="erroneous initiation">
        <sequence resource="EMBL-CDS" id="CAF26195"/>
    </conflict>
</comment>